<reference key="1">
    <citation type="journal article" date="1998" name="Anim. Genet.">
        <title>Characterization of beta-defensin prepropeptide mRNA from chicken and turkey bone marrow.</title>
        <authorList>
            <person name="Brockus C.W."/>
            <person name="Harmon B.G."/>
            <person name="Jackwood M.W."/>
        </authorList>
    </citation>
    <scope>NUCLEOTIDE SEQUENCE [MRNA]</scope>
    <source>
        <tissue>Bone marrow</tissue>
    </source>
</reference>
<reference key="2">
    <citation type="journal article" date="2004" name="BMC Genomics">
        <title>A genome-wide screen identifies a single beta-defensin gene cluster in the chicken: implications for the origin and evolution of mammalian defensins.</title>
        <authorList>
            <person name="Xiao Y."/>
            <person name="Hughes A.L."/>
            <person name="Ando J."/>
            <person name="Matsuda Y."/>
            <person name="Cheng J.-F."/>
            <person name="Skinner-Noble D."/>
            <person name="Zhang G."/>
        </authorList>
    </citation>
    <scope>NUCLEOTIDE SEQUENCE [GENOMIC DNA]</scope>
</reference>
<reference key="3">
    <citation type="submission" date="2004-06" db="EMBL/GenBank/DDBJ databases">
        <title>Chicken defensin gene structure.</title>
        <authorList>
            <person name="Zhang H."/>
            <person name="Bi Y."/>
            <person name="Cao Y."/>
            <person name="Chen X."/>
        </authorList>
    </citation>
    <scope>NUCLEOTIDE SEQUENCE [GENOMIC DNA]</scope>
</reference>
<reference key="4">
    <citation type="submission" date="2006-07" db="EMBL/GenBank/DDBJ databases">
        <title>Chicken beta-defensin in China chicken breeds.</title>
        <authorList>
            <person name="Chen Y."/>
            <person name="Cao Y."/>
            <person name="Xie Q."/>
            <person name="Bi Y."/>
            <person name="Chen J."/>
        </authorList>
    </citation>
    <scope>NUCLEOTIDE SEQUENCE [MRNA]</scope>
    <source>
        <strain>Guangxi Huang</strain>
        <strain>Huiyang bearded</strain>
        <strain>Qingyuan Ma</strain>
        <strain>Taihe silkies</strain>
        <strain>Xinghua</strain>
    </source>
</reference>
<reference key="5">
    <citation type="submission" date="2006-07" db="EMBL/GenBank/DDBJ databases">
        <title>The cDNA cloning and sequencing of chicken beta-defensin (Gal-1).</title>
        <authorList>
            <person name="Wu J."/>
            <person name="Song M.X."/>
            <person name="Li Y.F."/>
        </authorList>
    </citation>
    <scope>NUCLEOTIDE SEQUENCE [MRNA]</scope>
    <source>
        <tissue>Blood</tissue>
    </source>
</reference>
<reference key="6">
    <citation type="journal article" date="1994" name="FEBS Lett.">
        <title>Gallinacins: cysteine-rich antimicrobial peptides of chicken leukocytes.</title>
        <authorList>
            <person name="Harwig S.S.L."/>
            <person name="Swiderek K.M."/>
            <person name="Kokryakov V.N."/>
            <person name="Tan L."/>
            <person name="Lee T.D."/>
            <person name="Panyutich E.A."/>
            <person name="Aleshina G.M."/>
            <person name="Shamova O.V."/>
            <person name="Lehrer R.I."/>
        </authorList>
    </citation>
    <scope>PROTEIN SEQUENCE OF 26-65</scope>
    <scope>FUNCTION</scope>
    <scope>CHARACTERIZATION</scope>
    <source>
        <strain>Broiler</strain>
        <tissue>Leukocyte</tissue>
    </source>
</reference>
<reference key="7">
    <citation type="journal article" date="2004" name="Immunogenetics">
        <title>Bioinformatic discovery and initial characterisation of nine novel antimicrobial peptide genes in the chicken.</title>
        <authorList>
            <person name="Lynn D.J."/>
            <person name="Higgs R."/>
            <person name="Gaines S."/>
            <person name="Tierney J."/>
            <person name="James T."/>
            <person name="Lloyd A.T."/>
            <person name="Fares M.A."/>
            <person name="Mulcahy G."/>
            <person name="O'Farrelly C."/>
        </authorList>
    </citation>
    <scope>TISSUE SPECIFICITY</scope>
</reference>
<reference key="8">
    <citation type="journal article" date="2006" name="J. Reprod. Dev.">
        <title>Effects of age, egg-laying activity, and Salmonella-inoculation on the expressions of gallinacin mRNA in the vagina of the hen oviduct.</title>
        <authorList>
            <person name="Yoshimura Y."/>
            <person name="Ohashi H."/>
            <person name="Subedi K."/>
            <person name="Nishibori M."/>
            <person name="Isobe N."/>
        </authorList>
    </citation>
    <scope>TISSUE SPECIFICITY</scope>
    <scope>DEVELOPMENTAL STAGE</scope>
    <scope>INDUCTION</scope>
</reference>
<reference key="9">
    <citation type="journal article" date="2007" name="Reproduction">
        <title>Changes in the expression of gallinacins, antimicrobial peptides, in ovarian follicles during follicular growth and in response to lipopolysaccharide in laying hens (Gallus domesticus).</title>
        <authorList>
            <person name="Subedi K."/>
            <person name="Isobe N."/>
            <person name="Nishibori M."/>
            <person name="Yoshimura Y."/>
        </authorList>
    </citation>
    <scope>TISSUE SPECIFICITY</scope>
    <scope>DEVELOPMENTAL STAGE</scope>
    <scope>INDUCTION</scope>
</reference>
<accession>P46156</accession>
<accession>Q09MK1</accession>
<accession>Q0PWH4</accession>
<accession>Q6B9W7</accession>
<accession>Q6GXJ4</accession>
<sequence length="65" mass="7209">MRIVYLLLPFILLLAQGAAGSSQALGRKSDCFRKSGFCAFLKCPSLTLISGKCSRFYLCCKRIWG</sequence>
<proteinExistence type="evidence at protein level"/>
<comment type="function">
    <text evidence="6">Has bactericidal activity. Potent activity against E.coli ML-35, L.monocytogenes EGD and C.albicans.</text>
</comment>
<comment type="subcellular location">
    <subcellularLocation>
        <location>Secreted</location>
    </subcellularLocation>
    <subcellularLocation>
        <location>Cytoplasmic granule</location>
    </subcellularLocation>
</comment>
<comment type="tissue specificity">
    <text evidence="3 4 5">Strong expression in the bone marrow, lung, testis. Moderate expression in the bursa and intestine. Low expression in the cloaca, gall bladder, brain and pancreas. Expressed in the vagina, ovarian stroma and the theca and granulosa layers of the ovarian follicle.</text>
</comment>
<comment type="developmental stage">
    <text evidence="4 5">Detected in the theca layer of the ovarian follicle in the white follicle (WF) stage, but decreases throughout the F1, F3, F5, and postovulatory follicle stages. Detected in the granulosa layer of the ovarian follicle in the white follicle (WF) stage, F1, F3, F5, and postovulatory follicle stages. In the vagina expression is higher in laying hens than in non-laying hens, and is higher in older laying hens than in young laying hens.</text>
</comment>
<comment type="induction">
    <text evidence="4 5">Induced in the theca layer of the F3 stage ovarian follicle by intravenous injection of LPS. Repressed in the granulosa layer of the F3 stage ovarian follicle by intravenous injection of LPS. Expression in cultured vaginal cells is increased by LPS and S.enteritidis. Expression in the kidney and liver is not affected by intravenous injection of LPS.</text>
</comment>
<comment type="similarity">
    <text evidence="7">Belongs to the beta-defensin family.</text>
</comment>
<keyword id="KW-0044">Antibiotic</keyword>
<keyword id="KW-0929">Antimicrobial</keyword>
<keyword id="KW-0211">Defensin</keyword>
<keyword id="KW-0903">Direct protein sequencing</keyword>
<keyword id="KW-1015">Disulfide bond</keyword>
<keyword id="KW-0295">Fungicide</keyword>
<keyword id="KW-1185">Reference proteome</keyword>
<keyword id="KW-0964">Secreted</keyword>
<keyword id="KW-0732">Signal</keyword>
<dbReference type="EMBL" id="AF033335">
    <property type="protein sequence ID" value="AAC36051.1"/>
    <property type="molecule type" value="mRNA"/>
</dbReference>
<dbReference type="EMBL" id="AY621316">
    <property type="protein sequence ID" value="AAT48925.1"/>
    <property type="molecule type" value="Genomic_DNA"/>
</dbReference>
<dbReference type="EMBL" id="AY672653">
    <property type="protein sequence ID" value="AAT76974.1"/>
    <property type="molecule type" value="Genomic_DNA"/>
</dbReference>
<dbReference type="EMBL" id="DQ677632">
    <property type="protein sequence ID" value="ABG73366.1"/>
    <property type="molecule type" value="mRNA"/>
</dbReference>
<dbReference type="EMBL" id="DQ858338">
    <property type="protein sequence ID" value="ABI48254.1"/>
    <property type="molecule type" value="mRNA"/>
</dbReference>
<dbReference type="EMBL" id="DQ858324">
    <property type="protein sequence ID" value="ABI48240.1"/>
    <property type="molecule type" value="mRNA"/>
</dbReference>
<dbReference type="EMBL" id="DQ858311">
    <property type="protein sequence ID" value="ABI48227.1"/>
    <property type="molecule type" value="mRNA"/>
</dbReference>
<dbReference type="EMBL" id="DQ858298">
    <property type="protein sequence ID" value="ABI48214.1"/>
    <property type="molecule type" value="mRNA"/>
</dbReference>
<dbReference type="EMBL" id="DQ862462">
    <property type="protein sequence ID" value="ABI49682.1"/>
    <property type="molecule type" value="mRNA"/>
</dbReference>
<dbReference type="PIR" id="S43283">
    <property type="entry name" value="S43283"/>
</dbReference>
<dbReference type="RefSeq" id="NP_990324.1">
    <property type="nucleotide sequence ID" value="NM_204993.1"/>
</dbReference>
<dbReference type="SMR" id="P46156"/>
<dbReference type="FunCoup" id="P46156">
    <property type="interactions" value="17"/>
</dbReference>
<dbReference type="STRING" id="9031.ENSGALP00000035925"/>
<dbReference type="PaxDb" id="9031-ENSGALP00000035925"/>
<dbReference type="Ensembl" id="ENSGALT00010018716.1">
    <property type="protein sequence ID" value="ENSGALP00010010266.1"/>
    <property type="gene ID" value="ENSGALG00010007863.1"/>
</dbReference>
<dbReference type="GeneID" id="395841"/>
<dbReference type="KEGG" id="gga:395841"/>
<dbReference type="CTD" id="395841"/>
<dbReference type="VEuPathDB" id="HostDB:geneid_395841"/>
<dbReference type="GeneTree" id="ENSGT00730000114755"/>
<dbReference type="HOGENOM" id="CLU_189296_5_0_1"/>
<dbReference type="InParanoid" id="P46156"/>
<dbReference type="OMA" id="RQNGYCG"/>
<dbReference type="OrthoDB" id="9116720at2759"/>
<dbReference type="Reactome" id="R-GGA-1461957">
    <property type="pathway name" value="Beta defensins"/>
</dbReference>
<dbReference type="Reactome" id="R-GGA-1461973">
    <property type="pathway name" value="Defensins"/>
</dbReference>
<dbReference type="PRO" id="PR:P46156"/>
<dbReference type="Proteomes" id="UP000000539">
    <property type="component" value="Chromosome 3"/>
</dbReference>
<dbReference type="Bgee" id="ENSGALG00000022815">
    <property type="expression patterns" value="Expressed in granulocyte and 7 other cell types or tissues"/>
</dbReference>
<dbReference type="GO" id="GO:0005615">
    <property type="term" value="C:extracellular space"/>
    <property type="evidence" value="ECO:0000318"/>
    <property type="project" value="GO_Central"/>
</dbReference>
<dbReference type="GO" id="GO:0030141">
    <property type="term" value="C:secretory granule"/>
    <property type="evidence" value="ECO:0000304"/>
    <property type="project" value="AgBase"/>
</dbReference>
<dbReference type="GO" id="GO:0031731">
    <property type="term" value="F:CCR6 chemokine receptor binding"/>
    <property type="evidence" value="ECO:0000318"/>
    <property type="project" value="GO_Central"/>
</dbReference>
<dbReference type="GO" id="GO:0042056">
    <property type="term" value="F:chemoattractant activity"/>
    <property type="evidence" value="ECO:0000318"/>
    <property type="project" value="GO_Central"/>
</dbReference>
<dbReference type="GO" id="GO:0060326">
    <property type="term" value="P:cell chemotaxis"/>
    <property type="evidence" value="ECO:0000318"/>
    <property type="project" value="GO_Central"/>
</dbReference>
<dbReference type="GO" id="GO:0006952">
    <property type="term" value="P:defense response"/>
    <property type="evidence" value="ECO:0000304"/>
    <property type="project" value="AgBase"/>
</dbReference>
<dbReference type="GO" id="GO:0042742">
    <property type="term" value="P:defense response to bacterium"/>
    <property type="evidence" value="ECO:0000318"/>
    <property type="project" value="GO_Central"/>
</dbReference>
<dbReference type="GO" id="GO:0050832">
    <property type="term" value="P:defense response to fungus"/>
    <property type="evidence" value="ECO:0007669"/>
    <property type="project" value="UniProtKB-KW"/>
</dbReference>
<dbReference type="GO" id="GO:0031640">
    <property type="term" value="P:killing of cells of another organism"/>
    <property type="evidence" value="ECO:0007669"/>
    <property type="project" value="UniProtKB-KW"/>
</dbReference>
<dbReference type="InterPro" id="IPR001855">
    <property type="entry name" value="Defensin_beta-like"/>
</dbReference>
<dbReference type="PANTHER" id="PTHR20515">
    <property type="entry name" value="BETA-DEFENSIN"/>
    <property type="match status" value="1"/>
</dbReference>
<dbReference type="PANTHER" id="PTHR20515:SF20">
    <property type="entry name" value="GALLINACIN-1-RELATED"/>
    <property type="match status" value="1"/>
</dbReference>
<dbReference type="Pfam" id="PF00711">
    <property type="entry name" value="Defensin_beta"/>
    <property type="match status" value="1"/>
</dbReference>
<dbReference type="SUPFAM" id="SSF57392">
    <property type="entry name" value="Defensin-like"/>
    <property type="match status" value="1"/>
</dbReference>
<protein>
    <recommendedName>
        <fullName>Gallinacin-1</fullName>
        <shortName>Gal-1</shortName>
    </recommendedName>
    <alternativeName>
        <fullName>Beta-defensin 1</fullName>
    </alternativeName>
</protein>
<feature type="signal peptide" evidence="2">
    <location>
        <begin position="1"/>
        <end position="19"/>
    </location>
</feature>
<feature type="propeptide" id="PRO_0000007008" evidence="6">
    <location>
        <begin position="20"/>
        <end position="25"/>
    </location>
</feature>
<feature type="peptide" id="PRO_0000007009" description="Gallinacin-1">
    <location>
        <begin position="26"/>
        <end position="65"/>
    </location>
</feature>
<feature type="disulfide bond" evidence="1">
    <location>
        <begin position="31"/>
        <end position="59"/>
    </location>
</feature>
<feature type="disulfide bond" evidence="1">
    <location>
        <begin position="38"/>
        <end position="53"/>
    </location>
</feature>
<feature type="disulfide bond" evidence="1">
    <location>
        <begin position="43"/>
        <end position="60"/>
    </location>
</feature>
<feature type="sequence conflict" description="In Ref. 5; ABI49682." evidence="7" ref="5">
    <original>Y</original>
    <variation>C</variation>
    <location>
        <position position="5"/>
    </location>
</feature>
<feature type="sequence conflict" description="In Ref. 3; AAT76974." evidence="7" ref="3">
    <original>L</original>
    <variation>I</variation>
    <location>
        <position position="8"/>
    </location>
</feature>
<name>GLL1_CHICK</name>
<organism>
    <name type="scientific">Gallus gallus</name>
    <name type="common">Chicken</name>
    <dbReference type="NCBI Taxonomy" id="9031"/>
    <lineage>
        <taxon>Eukaryota</taxon>
        <taxon>Metazoa</taxon>
        <taxon>Chordata</taxon>
        <taxon>Craniata</taxon>
        <taxon>Vertebrata</taxon>
        <taxon>Euteleostomi</taxon>
        <taxon>Archelosauria</taxon>
        <taxon>Archosauria</taxon>
        <taxon>Dinosauria</taxon>
        <taxon>Saurischia</taxon>
        <taxon>Theropoda</taxon>
        <taxon>Coelurosauria</taxon>
        <taxon>Aves</taxon>
        <taxon>Neognathae</taxon>
        <taxon>Galloanserae</taxon>
        <taxon>Galliformes</taxon>
        <taxon>Phasianidae</taxon>
        <taxon>Phasianinae</taxon>
        <taxon>Gallus</taxon>
    </lineage>
</organism>
<gene>
    <name type="primary">GAL1</name>
</gene>
<evidence type="ECO:0000250" key="1"/>
<evidence type="ECO:0000255" key="2"/>
<evidence type="ECO:0000269" key="3">
    <source>
    </source>
</evidence>
<evidence type="ECO:0000269" key="4">
    <source>
    </source>
</evidence>
<evidence type="ECO:0000269" key="5">
    <source>
    </source>
</evidence>
<evidence type="ECO:0000269" key="6">
    <source>
    </source>
</evidence>
<evidence type="ECO:0000305" key="7"/>